<name>TSAD_RIEAN</name>
<dbReference type="EC" id="2.3.1.234" evidence="1"/>
<dbReference type="EMBL" id="AF202727">
    <property type="protein sequence ID" value="AAG39646.1"/>
    <property type="molecule type" value="Genomic_DNA"/>
</dbReference>
<dbReference type="SMR" id="Q9F0V0"/>
<dbReference type="eggNOG" id="COG0533">
    <property type="taxonomic scope" value="Bacteria"/>
</dbReference>
<dbReference type="GO" id="GO:0005737">
    <property type="term" value="C:cytoplasm"/>
    <property type="evidence" value="ECO:0007669"/>
    <property type="project" value="UniProtKB-SubCell"/>
</dbReference>
<dbReference type="GO" id="GO:0005506">
    <property type="term" value="F:iron ion binding"/>
    <property type="evidence" value="ECO:0007669"/>
    <property type="project" value="UniProtKB-UniRule"/>
</dbReference>
<dbReference type="GO" id="GO:0061711">
    <property type="term" value="F:N(6)-L-threonylcarbamoyladenine synthase activity"/>
    <property type="evidence" value="ECO:0007669"/>
    <property type="project" value="UniProtKB-EC"/>
</dbReference>
<dbReference type="GO" id="GO:0002949">
    <property type="term" value="P:tRNA threonylcarbamoyladenosine modification"/>
    <property type="evidence" value="ECO:0007669"/>
    <property type="project" value="UniProtKB-UniRule"/>
</dbReference>
<dbReference type="CDD" id="cd24133">
    <property type="entry name" value="ASKHA_NBD_TsaD_bac"/>
    <property type="match status" value="1"/>
</dbReference>
<dbReference type="FunFam" id="3.30.420.40:FF:000040">
    <property type="entry name" value="tRNA N6-adenosine threonylcarbamoyltransferase"/>
    <property type="match status" value="1"/>
</dbReference>
<dbReference type="Gene3D" id="3.30.420.40">
    <property type="match status" value="2"/>
</dbReference>
<dbReference type="HAMAP" id="MF_01445">
    <property type="entry name" value="TsaD"/>
    <property type="match status" value="1"/>
</dbReference>
<dbReference type="InterPro" id="IPR043129">
    <property type="entry name" value="ATPase_NBD"/>
</dbReference>
<dbReference type="InterPro" id="IPR000905">
    <property type="entry name" value="Gcp-like_dom"/>
</dbReference>
<dbReference type="InterPro" id="IPR017861">
    <property type="entry name" value="KAE1/TsaD"/>
</dbReference>
<dbReference type="InterPro" id="IPR022450">
    <property type="entry name" value="TsaD"/>
</dbReference>
<dbReference type="NCBIfam" id="TIGR00329">
    <property type="entry name" value="gcp_kae1"/>
    <property type="match status" value="1"/>
</dbReference>
<dbReference type="NCBIfam" id="TIGR03723">
    <property type="entry name" value="T6A_TsaD_YgjD"/>
    <property type="match status" value="1"/>
</dbReference>
<dbReference type="PANTHER" id="PTHR11735">
    <property type="entry name" value="TRNA N6-ADENOSINE THREONYLCARBAMOYLTRANSFERASE"/>
    <property type="match status" value="1"/>
</dbReference>
<dbReference type="PANTHER" id="PTHR11735:SF6">
    <property type="entry name" value="TRNA N6-ADENOSINE THREONYLCARBAMOYLTRANSFERASE, MITOCHONDRIAL"/>
    <property type="match status" value="1"/>
</dbReference>
<dbReference type="Pfam" id="PF00814">
    <property type="entry name" value="TsaD"/>
    <property type="match status" value="1"/>
</dbReference>
<dbReference type="PRINTS" id="PR00789">
    <property type="entry name" value="OSIALOPTASE"/>
</dbReference>
<dbReference type="SUPFAM" id="SSF53067">
    <property type="entry name" value="Actin-like ATPase domain"/>
    <property type="match status" value="1"/>
</dbReference>
<feature type="chain" id="PRO_0000303526" description="tRNA N6-adenosine threonylcarbamoyltransferase">
    <location>
        <begin position="1"/>
        <end position="341"/>
    </location>
</feature>
<feature type="binding site" evidence="1">
    <location>
        <position position="112"/>
    </location>
    <ligand>
        <name>Fe cation</name>
        <dbReference type="ChEBI" id="CHEBI:24875"/>
    </ligand>
</feature>
<feature type="binding site" evidence="1">
    <location>
        <position position="116"/>
    </location>
    <ligand>
        <name>Fe cation</name>
        <dbReference type="ChEBI" id="CHEBI:24875"/>
    </ligand>
</feature>
<feature type="binding site" evidence="1">
    <location>
        <begin position="138"/>
        <end position="142"/>
    </location>
    <ligand>
        <name>substrate</name>
    </ligand>
</feature>
<feature type="binding site" evidence="1">
    <location>
        <position position="171"/>
    </location>
    <ligand>
        <name>substrate</name>
    </ligand>
</feature>
<feature type="binding site" evidence="1">
    <location>
        <position position="184"/>
    </location>
    <ligand>
        <name>substrate</name>
    </ligand>
</feature>
<feature type="binding site" evidence="1">
    <location>
        <position position="188"/>
    </location>
    <ligand>
        <name>substrate</name>
    </ligand>
</feature>
<feature type="binding site" evidence="1">
    <location>
        <position position="279"/>
    </location>
    <ligand>
        <name>substrate</name>
    </ligand>
</feature>
<feature type="binding site" evidence="1">
    <location>
        <position position="307"/>
    </location>
    <ligand>
        <name>Fe cation</name>
        <dbReference type="ChEBI" id="CHEBI:24875"/>
    </ligand>
</feature>
<reference key="1">
    <citation type="journal article" date="2002" name="J. Bacteriol.">
        <title>Identification and characterization of CAMP cohemolysin as a potential virulence factor of Riemerella anatipestifer.</title>
        <authorList>
            <person name="Crasta K.C."/>
            <person name="Chua K.L."/>
            <person name="Subramaniam S."/>
            <person name="Frey J."/>
            <person name="Loh H."/>
            <person name="Tan H.M."/>
        </authorList>
    </citation>
    <scope>NUCLEOTIDE SEQUENCE [GENOMIC DNA]</scope>
    <source>
        <strain>S19 30/90</strain>
    </source>
</reference>
<keyword id="KW-0012">Acyltransferase</keyword>
<keyword id="KW-0963">Cytoplasm</keyword>
<keyword id="KW-0408">Iron</keyword>
<keyword id="KW-0479">Metal-binding</keyword>
<keyword id="KW-0808">Transferase</keyword>
<keyword id="KW-0819">tRNA processing</keyword>
<proteinExistence type="inferred from homology"/>
<accession>Q9F0V0</accession>
<evidence type="ECO:0000255" key="1">
    <source>
        <dbReference type="HAMAP-Rule" id="MF_01445"/>
    </source>
</evidence>
<comment type="function">
    <text evidence="1">Required for the formation of a threonylcarbamoyl group on adenosine at position 37 (t(6)A37) in tRNAs that read codons beginning with adenine. Is involved in the transfer of the threonylcarbamoyl moiety of threonylcarbamoyl-AMP (TC-AMP) to the N6 group of A37, together with TsaE and TsaB. TsaD likely plays a direct catalytic role in this reaction.</text>
</comment>
<comment type="catalytic activity">
    <reaction evidence="1">
        <text>L-threonylcarbamoyladenylate + adenosine(37) in tRNA = N(6)-L-threonylcarbamoyladenosine(37) in tRNA + AMP + H(+)</text>
        <dbReference type="Rhea" id="RHEA:37059"/>
        <dbReference type="Rhea" id="RHEA-COMP:10162"/>
        <dbReference type="Rhea" id="RHEA-COMP:10163"/>
        <dbReference type="ChEBI" id="CHEBI:15378"/>
        <dbReference type="ChEBI" id="CHEBI:73682"/>
        <dbReference type="ChEBI" id="CHEBI:74411"/>
        <dbReference type="ChEBI" id="CHEBI:74418"/>
        <dbReference type="ChEBI" id="CHEBI:456215"/>
        <dbReference type="EC" id="2.3.1.234"/>
    </reaction>
</comment>
<comment type="cofactor">
    <cofactor evidence="1">
        <name>Fe(2+)</name>
        <dbReference type="ChEBI" id="CHEBI:29033"/>
    </cofactor>
    <text evidence="1">Binds 1 Fe(2+) ion per subunit.</text>
</comment>
<comment type="subcellular location">
    <subcellularLocation>
        <location evidence="1">Cytoplasm</location>
    </subcellularLocation>
</comment>
<comment type="similarity">
    <text evidence="1">Belongs to the KAE1 / TsaD family.</text>
</comment>
<protein>
    <recommendedName>
        <fullName evidence="1">tRNA N6-adenosine threonylcarbamoyltransferase</fullName>
        <ecNumber evidence="1">2.3.1.234</ecNumber>
    </recommendedName>
    <alternativeName>
        <fullName evidence="1">N6-L-threonylcarbamoyladenine synthase</fullName>
        <shortName evidence="1">t(6)A synthase</shortName>
    </alternativeName>
    <alternativeName>
        <fullName evidence="1">t(6)A37 threonylcarbamoyladenosine biosynthesis protein TsaD</fullName>
    </alternativeName>
    <alternativeName>
        <fullName evidence="1">tRNA threonylcarbamoyladenosine biosynthesis protein TsaD</fullName>
    </alternativeName>
</protein>
<organism>
    <name type="scientific">Riemerella anatipestifer</name>
    <name type="common">Moraxella anatipestifer</name>
    <dbReference type="NCBI Taxonomy" id="34085"/>
    <lineage>
        <taxon>Bacteria</taxon>
        <taxon>Pseudomonadati</taxon>
        <taxon>Bacteroidota</taxon>
        <taxon>Flavobacteriia</taxon>
        <taxon>Flavobacteriales</taxon>
        <taxon>Weeksellaceae</taxon>
        <taxon>Riemerella</taxon>
    </lineage>
</organism>
<gene>
    <name evidence="1" type="primary">tsaD</name>
    <name type="synonym">gcp</name>
</gene>
<sequence length="341" mass="37276">MKQSIILGIESSCDDTSAAIISGRKILSNVAATQAIHNEYGGVVPELASRAHQQNIIPVIEQSIQKANIQQNEICAIGFTRGPGLLGSLLVGTSFAKSLAMSLEAPLIEVNHLQAHILAHFIEDANPNPPKFPFLCLTVSGGHTMIVLVKDYFDMEIIGKTIDDAAGEAFDKIGKIFDLDYPAGPIIDKKSQNGSPNAFTFNKPKLEGYDYSFSGIKTSVLYFIQKELKKNPQFVNENIDDLCASVQKNIIEILMTKLEKAASDLGIKEIAIAGGVSANSALRQAMRENEQKLGWNIYIPKFEYTTDNAAMIAMVAQLKYERGEFANLSTTATARYELNVK</sequence>